<feature type="chain" id="PRO_1000089790" description="UPF0758 protein BcerKBAB4_4299">
    <location>
        <begin position="1"/>
        <end position="225"/>
    </location>
</feature>
<feature type="domain" description="MPN" evidence="1">
    <location>
        <begin position="103"/>
        <end position="225"/>
    </location>
</feature>
<feature type="short sequence motif" description="JAMM motif" evidence="1">
    <location>
        <begin position="174"/>
        <end position="187"/>
    </location>
</feature>
<feature type="binding site" evidence="1">
    <location>
        <position position="174"/>
    </location>
    <ligand>
        <name>Zn(2+)</name>
        <dbReference type="ChEBI" id="CHEBI:29105"/>
        <note>catalytic</note>
    </ligand>
</feature>
<feature type="binding site" evidence="1">
    <location>
        <position position="176"/>
    </location>
    <ligand>
        <name>Zn(2+)</name>
        <dbReference type="ChEBI" id="CHEBI:29105"/>
        <note>catalytic</note>
    </ligand>
</feature>
<feature type="binding site" evidence="1">
    <location>
        <position position="187"/>
    </location>
    <ligand>
        <name>Zn(2+)</name>
        <dbReference type="ChEBI" id="CHEBI:29105"/>
        <note>catalytic</note>
    </ligand>
</feature>
<comment type="similarity">
    <text evidence="2">Belongs to the UPF0758 family.</text>
</comment>
<protein>
    <recommendedName>
        <fullName>UPF0758 protein BcerKBAB4_4299</fullName>
    </recommendedName>
</protein>
<keyword id="KW-0378">Hydrolase</keyword>
<keyword id="KW-0479">Metal-binding</keyword>
<keyword id="KW-0482">Metalloprotease</keyword>
<keyword id="KW-0645">Protease</keyword>
<keyword id="KW-0862">Zinc</keyword>
<reference key="1">
    <citation type="journal article" date="2008" name="Chem. Biol. Interact.">
        <title>Extending the Bacillus cereus group genomics to putative food-borne pathogens of different toxicity.</title>
        <authorList>
            <person name="Lapidus A."/>
            <person name="Goltsman E."/>
            <person name="Auger S."/>
            <person name="Galleron N."/>
            <person name="Segurens B."/>
            <person name="Dossat C."/>
            <person name="Land M.L."/>
            <person name="Broussolle V."/>
            <person name="Brillard J."/>
            <person name="Guinebretiere M.-H."/>
            <person name="Sanchis V."/>
            <person name="Nguen-the C."/>
            <person name="Lereclus D."/>
            <person name="Richardson P."/>
            <person name="Wincker P."/>
            <person name="Weissenbach J."/>
            <person name="Ehrlich S.D."/>
            <person name="Sorokin A."/>
        </authorList>
    </citation>
    <scope>NUCLEOTIDE SEQUENCE [LARGE SCALE GENOMIC DNA]</scope>
    <source>
        <strain>KBAB4</strain>
    </source>
</reference>
<dbReference type="EMBL" id="CP000903">
    <property type="protein sequence ID" value="ABY45458.1"/>
    <property type="molecule type" value="Genomic_DNA"/>
</dbReference>
<dbReference type="SMR" id="A9VIS8"/>
<dbReference type="KEGG" id="bwe:BcerKBAB4_4299"/>
<dbReference type="eggNOG" id="COG2003">
    <property type="taxonomic scope" value="Bacteria"/>
</dbReference>
<dbReference type="HOGENOM" id="CLU_073529_0_2_9"/>
<dbReference type="Proteomes" id="UP000002154">
    <property type="component" value="Chromosome"/>
</dbReference>
<dbReference type="GO" id="GO:0046872">
    <property type="term" value="F:metal ion binding"/>
    <property type="evidence" value="ECO:0007669"/>
    <property type="project" value="UniProtKB-KW"/>
</dbReference>
<dbReference type="GO" id="GO:0008237">
    <property type="term" value="F:metallopeptidase activity"/>
    <property type="evidence" value="ECO:0007669"/>
    <property type="project" value="UniProtKB-KW"/>
</dbReference>
<dbReference type="GO" id="GO:0006508">
    <property type="term" value="P:proteolysis"/>
    <property type="evidence" value="ECO:0007669"/>
    <property type="project" value="UniProtKB-KW"/>
</dbReference>
<dbReference type="CDD" id="cd08071">
    <property type="entry name" value="MPN_DUF2466"/>
    <property type="match status" value="1"/>
</dbReference>
<dbReference type="Gene3D" id="3.40.140.10">
    <property type="entry name" value="Cytidine Deaminase, domain 2"/>
    <property type="match status" value="1"/>
</dbReference>
<dbReference type="InterPro" id="IPR037518">
    <property type="entry name" value="MPN"/>
</dbReference>
<dbReference type="InterPro" id="IPR025657">
    <property type="entry name" value="RadC_JAB"/>
</dbReference>
<dbReference type="InterPro" id="IPR010994">
    <property type="entry name" value="RuvA_2-like"/>
</dbReference>
<dbReference type="InterPro" id="IPR001405">
    <property type="entry name" value="UPF0758"/>
</dbReference>
<dbReference type="InterPro" id="IPR020891">
    <property type="entry name" value="UPF0758_CS"/>
</dbReference>
<dbReference type="InterPro" id="IPR046778">
    <property type="entry name" value="UPF0758_N"/>
</dbReference>
<dbReference type="NCBIfam" id="NF000642">
    <property type="entry name" value="PRK00024.1"/>
    <property type="match status" value="1"/>
</dbReference>
<dbReference type="NCBIfam" id="TIGR00608">
    <property type="entry name" value="radc"/>
    <property type="match status" value="1"/>
</dbReference>
<dbReference type="PANTHER" id="PTHR30471">
    <property type="entry name" value="DNA REPAIR PROTEIN RADC"/>
    <property type="match status" value="1"/>
</dbReference>
<dbReference type="PANTHER" id="PTHR30471:SF3">
    <property type="entry name" value="UPF0758 PROTEIN YEES-RELATED"/>
    <property type="match status" value="1"/>
</dbReference>
<dbReference type="Pfam" id="PF04002">
    <property type="entry name" value="RadC"/>
    <property type="match status" value="1"/>
</dbReference>
<dbReference type="Pfam" id="PF20582">
    <property type="entry name" value="UPF0758_N"/>
    <property type="match status" value="1"/>
</dbReference>
<dbReference type="SUPFAM" id="SSF102712">
    <property type="entry name" value="JAB1/MPN domain"/>
    <property type="match status" value="1"/>
</dbReference>
<dbReference type="SUPFAM" id="SSF47781">
    <property type="entry name" value="RuvA domain 2-like"/>
    <property type="match status" value="1"/>
</dbReference>
<dbReference type="PROSITE" id="PS50249">
    <property type="entry name" value="MPN"/>
    <property type="match status" value="1"/>
</dbReference>
<dbReference type="PROSITE" id="PS01302">
    <property type="entry name" value="UPF0758"/>
    <property type="match status" value="1"/>
</dbReference>
<sequence length="225" mass="25701">MNGIRDVVREEQPRERLLLEGAGSLSNRELLAVLLRTGSKEETVLTLSDNILHHFDGLRMLKDATLEEMMSIHGVGIAKASQLMAAFELGRRMVRLEYQNRYSIRSPEDCASYMMEEMRFLQQEHFVCLYLNTKNQVIHRQTIFIGSLNTSIVHPREVFKEAFRRAAASIICLHNHPSGDPAPSREDIEVTKRLVECGRIIGIEVLDHIIIGDHKFVSLKEKGHI</sequence>
<gene>
    <name type="ordered locus">BcerKBAB4_4299</name>
</gene>
<proteinExistence type="inferred from homology"/>
<organism>
    <name type="scientific">Bacillus mycoides (strain KBAB4)</name>
    <name type="common">Bacillus weihenstephanensis</name>
    <dbReference type="NCBI Taxonomy" id="315730"/>
    <lineage>
        <taxon>Bacteria</taxon>
        <taxon>Bacillati</taxon>
        <taxon>Bacillota</taxon>
        <taxon>Bacilli</taxon>
        <taxon>Bacillales</taxon>
        <taxon>Bacillaceae</taxon>
        <taxon>Bacillus</taxon>
        <taxon>Bacillus cereus group</taxon>
    </lineage>
</organism>
<name>Y4299_BACMK</name>
<evidence type="ECO:0000255" key="1">
    <source>
        <dbReference type="PROSITE-ProRule" id="PRU01182"/>
    </source>
</evidence>
<evidence type="ECO:0000305" key="2"/>
<accession>A9VIS8</accession>